<keyword id="KW-1003">Cell membrane</keyword>
<keyword id="KW-0418">Kinase</keyword>
<keyword id="KW-0472">Membrane</keyword>
<keyword id="KW-0598">Phosphotransferase system</keyword>
<keyword id="KW-0762">Sugar transport</keyword>
<keyword id="KW-0808">Transferase</keyword>
<keyword id="KW-0812">Transmembrane</keyword>
<keyword id="KW-1133">Transmembrane helix</keyword>
<keyword id="KW-0813">Transport</keyword>
<proteinExistence type="inferred from homology"/>
<organism>
    <name type="scientific">Staphylococcus aureus (strain Newman)</name>
    <dbReference type="NCBI Taxonomy" id="426430"/>
    <lineage>
        <taxon>Bacteria</taxon>
        <taxon>Bacillati</taxon>
        <taxon>Bacillota</taxon>
        <taxon>Bacilli</taxon>
        <taxon>Bacillales</taxon>
        <taxon>Staphylococcaceae</taxon>
        <taxon>Staphylococcus</taxon>
    </lineage>
</organism>
<comment type="function">
    <text evidence="1">The phosphoenolpyruvate-dependent sugar phosphotransferase system (sugar PTS), a major carbohydrate active transport system, catalyzes the phosphorylation of incoming sugar substrates concomitantly with their translocation across the cell membrane. This system is involved in glucose transport.</text>
</comment>
<comment type="catalytic activity">
    <reaction evidence="1">
        <text>N(pros)-phospho-L-histidyl-[protein] + D-glucose(out) = D-glucose 6-phosphate(in) + L-histidyl-[protein]</text>
        <dbReference type="Rhea" id="RHEA:33367"/>
        <dbReference type="Rhea" id="RHEA-COMP:9745"/>
        <dbReference type="Rhea" id="RHEA-COMP:9746"/>
        <dbReference type="ChEBI" id="CHEBI:4167"/>
        <dbReference type="ChEBI" id="CHEBI:29979"/>
        <dbReference type="ChEBI" id="CHEBI:61548"/>
        <dbReference type="ChEBI" id="CHEBI:64837"/>
        <dbReference type="EC" id="2.7.1.199"/>
    </reaction>
</comment>
<comment type="subcellular location">
    <subcellularLocation>
        <location evidence="4">Cell membrane</location>
        <topology evidence="4">Multi-pass membrane protein</topology>
    </subcellularLocation>
</comment>
<comment type="domain">
    <text evidence="4">The EIIC domain forms the PTS system translocation channel and contains the specific substrate-binding site.</text>
</comment>
<comment type="domain">
    <text evidence="3">The EIIB domain is phosphorylated by phospho-EIIA on a cysteinyl or histidyl residue, depending on the transported sugar. Then, it transfers the phosphoryl group to the sugar substrate concomitantly with the sugar uptake processed by the EIIC domain.</text>
</comment>
<comment type="domain">
    <text evidence="2">The EIIA domain is phosphorylated by phospho-HPr on a histidyl residue. Then, it transfers the phosphoryl group to the EIIB domain.</text>
</comment>
<name>PTG3C_STAAE</name>
<sequence length="681" mass="73925">MRKKLFGQLQRIGKALMLPVAILPAAGLLLAIGTAMQGESLQHYLPFIQNGGVQTVAKLMTGAGGIIFDNLPMIFALGVAIGLAGGDGVAAIAAFVGYIIMNKTMGDFLQVTPKNIGDPASGYASILGIPTLQTGVFGGIIIGALAAWCYNKFYNINLPSYLGFFAGKRFVPIMMATTSFILAFPMALIWPTIQSGLNAFSTGLLDSNTGVAVFLFGFIKRLLIPFGLHHIFHAPFWFEFGSWKNAAGEIIHGDQRIFIEQIREGAHLTAGKFMQGEFPVMMFGLPAAALAIYHTAKPENKKVVAGLMGSAALTSFLTGITEPLEFSFLFVAPLLFFIHAVLDGLSFLTLYLLDLHLGYTFSGGFIDYFLLGILPNKTQWWLVIPVGLVYAVIYYFVFRFLIVKLKYKTPGREDKQSQAATASATELPYAVLEAMGGKANIKHLDACITRLRVEVNDKSKVDVPGLKDLGASGVLEVGNNMQAIFGPKSDQIKHEMQQIMNGQVVENPTTMEDDKDETVVVAEDKSATSELSHIVHAPLTGEVTPLSEVPDQVFSEKMMGDGIAIKPSQGEVRAPFNGKVQMIFPTKHAIGLVSDSGLELLIHIGLDTVKLNGEGFTLHVEEGQEVKQGDLLINFDLDYIRNHAKSDITPIIVTQGNITNLDFKQGEHGNISFGDQLFEAK</sequence>
<dbReference type="EC" id="2.7.1.199" evidence="1"/>
<dbReference type="EMBL" id="AP009351">
    <property type="protein sequence ID" value="BAF66405.1"/>
    <property type="molecule type" value="Genomic_DNA"/>
</dbReference>
<dbReference type="RefSeq" id="WP_001227724.1">
    <property type="nucleotide sequence ID" value="NZ_JBBIAE010000003.1"/>
</dbReference>
<dbReference type="SMR" id="A6QDH3"/>
<dbReference type="KEGG" id="sae:NWMN_0133"/>
<dbReference type="HOGENOM" id="CLU_012312_1_1_9"/>
<dbReference type="Proteomes" id="UP000006386">
    <property type="component" value="Chromosome"/>
</dbReference>
<dbReference type="GO" id="GO:0005886">
    <property type="term" value="C:plasma membrane"/>
    <property type="evidence" value="ECO:0007669"/>
    <property type="project" value="UniProtKB-SubCell"/>
</dbReference>
<dbReference type="GO" id="GO:0055056">
    <property type="term" value="F:D-glucose transmembrane transporter activity"/>
    <property type="evidence" value="ECO:0007669"/>
    <property type="project" value="InterPro"/>
</dbReference>
<dbReference type="GO" id="GO:0016301">
    <property type="term" value="F:kinase activity"/>
    <property type="evidence" value="ECO:0007669"/>
    <property type="project" value="UniProtKB-KW"/>
</dbReference>
<dbReference type="GO" id="GO:0008982">
    <property type="term" value="F:protein-N(PI)-phosphohistidine-sugar phosphotransferase activity"/>
    <property type="evidence" value="ECO:0007669"/>
    <property type="project" value="InterPro"/>
</dbReference>
<dbReference type="GO" id="GO:0090563">
    <property type="term" value="F:protein-phosphocysteine-sugar phosphotransferase activity"/>
    <property type="evidence" value="ECO:0007669"/>
    <property type="project" value="TreeGrafter"/>
</dbReference>
<dbReference type="GO" id="GO:1904659">
    <property type="term" value="P:D-glucose transmembrane transport"/>
    <property type="evidence" value="ECO:0007669"/>
    <property type="project" value="InterPro"/>
</dbReference>
<dbReference type="GO" id="GO:0009401">
    <property type="term" value="P:phosphoenolpyruvate-dependent sugar phosphotransferase system"/>
    <property type="evidence" value="ECO:0007669"/>
    <property type="project" value="UniProtKB-KW"/>
</dbReference>
<dbReference type="CDD" id="cd00210">
    <property type="entry name" value="PTS_IIA_glc"/>
    <property type="match status" value="1"/>
</dbReference>
<dbReference type="CDD" id="cd00212">
    <property type="entry name" value="PTS_IIB_glc"/>
    <property type="match status" value="1"/>
</dbReference>
<dbReference type="FunFam" id="2.70.70.10:FF:000001">
    <property type="entry name" value="PTS system glucose-specific IIA component"/>
    <property type="match status" value="1"/>
</dbReference>
<dbReference type="FunFam" id="3.30.1360.60:FF:000001">
    <property type="entry name" value="PTS system glucose-specific IIBC component PtsG"/>
    <property type="match status" value="1"/>
</dbReference>
<dbReference type="Gene3D" id="2.70.70.10">
    <property type="entry name" value="Glucose Permease (Domain IIA)"/>
    <property type="match status" value="1"/>
</dbReference>
<dbReference type="Gene3D" id="3.30.1360.60">
    <property type="entry name" value="Glucose permease domain IIB"/>
    <property type="match status" value="1"/>
</dbReference>
<dbReference type="InterPro" id="IPR011055">
    <property type="entry name" value="Dup_hybrid_motif"/>
</dbReference>
<dbReference type="InterPro" id="IPR036878">
    <property type="entry name" value="Glu_permease_IIB"/>
</dbReference>
<dbReference type="InterPro" id="IPR018113">
    <property type="entry name" value="PTrfase_EIIB_Cys"/>
</dbReference>
<dbReference type="InterPro" id="IPR001127">
    <property type="entry name" value="PTS_EIIA_1_perm"/>
</dbReference>
<dbReference type="InterPro" id="IPR003352">
    <property type="entry name" value="PTS_EIIC"/>
</dbReference>
<dbReference type="InterPro" id="IPR013013">
    <property type="entry name" value="PTS_EIIC_1"/>
</dbReference>
<dbReference type="InterPro" id="IPR050429">
    <property type="entry name" value="PTS_Glucose_EIICBA"/>
</dbReference>
<dbReference type="InterPro" id="IPR001996">
    <property type="entry name" value="PTS_IIB_1"/>
</dbReference>
<dbReference type="InterPro" id="IPR011299">
    <property type="entry name" value="PTS_IIBC_glc"/>
</dbReference>
<dbReference type="NCBIfam" id="TIGR00826">
    <property type="entry name" value="EIIB_glc"/>
    <property type="match status" value="1"/>
</dbReference>
<dbReference type="NCBIfam" id="TIGR00830">
    <property type="entry name" value="PTBA"/>
    <property type="match status" value="1"/>
</dbReference>
<dbReference type="NCBIfam" id="TIGR02002">
    <property type="entry name" value="PTS-II-BC-glcB"/>
    <property type="match status" value="1"/>
</dbReference>
<dbReference type="PANTHER" id="PTHR30009">
    <property type="entry name" value="CYTOCHROME C-TYPE SYNTHESIS PROTEIN AND PTS TRANSMEMBRANE COMPONENT"/>
    <property type="match status" value="1"/>
</dbReference>
<dbReference type="PANTHER" id="PTHR30009:SF20">
    <property type="entry name" value="PTS SYSTEM GLUCOSE-SPECIFIC EIICB COMPONENT-RELATED"/>
    <property type="match status" value="1"/>
</dbReference>
<dbReference type="Pfam" id="PF00358">
    <property type="entry name" value="PTS_EIIA_1"/>
    <property type="match status" value="1"/>
</dbReference>
<dbReference type="Pfam" id="PF00367">
    <property type="entry name" value="PTS_EIIB"/>
    <property type="match status" value="1"/>
</dbReference>
<dbReference type="Pfam" id="PF02378">
    <property type="entry name" value="PTS_EIIC"/>
    <property type="match status" value="1"/>
</dbReference>
<dbReference type="SUPFAM" id="SSF51261">
    <property type="entry name" value="Duplicated hybrid motif"/>
    <property type="match status" value="1"/>
</dbReference>
<dbReference type="SUPFAM" id="SSF55604">
    <property type="entry name" value="Glucose permease domain IIB"/>
    <property type="match status" value="1"/>
</dbReference>
<dbReference type="PROSITE" id="PS51093">
    <property type="entry name" value="PTS_EIIA_TYPE_1"/>
    <property type="match status" value="1"/>
</dbReference>
<dbReference type="PROSITE" id="PS00371">
    <property type="entry name" value="PTS_EIIA_TYPE_1_HIS"/>
    <property type="match status" value="1"/>
</dbReference>
<dbReference type="PROSITE" id="PS51098">
    <property type="entry name" value="PTS_EIIB_TYPE_1"/>
    <property type="match status" value="1"/>
</dbReference>
<dbReference type="PROSITE" id="PS01035">
    <property type="entry name" value="PTS_EIIB_TYPE_1_CYS"/>
    <property type="match status" value="1"/>
</dbReference>
<dbReference type="PROSITE" id="PS51103">
    <property type="entry name" value="PTS_EIIC_TYPE_1"/>
    <property type="match status" value="1"/>
</dbReference>
<feature type="chain" id="PRO_0000351394" description="PTS system glucose-specific EIICBA component">
    <location>
        <begin position="1"/>
        <end position="681"/>
    </location>
</feature>
<feature type="transmembrane region" description="Helical" evidence="4">
    <location>
        <begin position="16"/>
        <end position="36"/>
    </location>
</feature>
<feature type="transmembrane region" description="Helical" evidence="4">
    <location>
        <begin position="73"/>
        <end position="93"/>
    </location>
</feature>
<feature type="transmembrane region" description="Helical" evidence="4">
    <location>
        <begin position="126"/>
        <end position="146"/>
    </location>
</feature>
<feature type="transmembrane region" description="Helical" evidence="4">
    <location>
        <begin position="170"/>
        <end position="190"/>
    </location>
</feature>
<feature type="transmembrane region" description="Helical" evidence="4">
    <location>
        <begin position="199"/>
        <end position="219"/>
    </location>
</feature>
<feature type="transmembrane region" description="Helical" evidence="4">
    <location>
        <begin position="273"/>
        <end position="293"/>
    </location>
</feature>
<feature type="transmembrane region" description="Helical" evidence="4">
    <location>
        <begin position="303"/>
        <end position="323"/>
    </location>
</feature>
<feature type="transmembrane region" description="Helical" evidence="4">
    <location>
        <begin position="328"/>
        <end position="348"/>
    </location>
</feature>
<feature type="transmembrane region" description="Helical" evidence="4">
    <location>
        <begin position="355"/>
        <end position="375"/>
    </location>
</feature>
<feature type="transmembrane region" description="Helical" evidence="4">
    <location>
        <begin position="383"/>
        <end position="403"/>
    </location>
</feature>
<feature type="domain" description="PTS EIIC type-1" evidence="4">
    <location>
        <begin position="3"/>
        <end position="414"/>
    </location>
</feature>
<feature type="domain" description="PTS EIIB type-1" evidence="3">
    <location>
        <begin position="425"/>
        <end position="506"/>
    </location>
</feature>
<feature type="domain" description="PTS EIIA type-1" evidence="2">
    <location>
        <begin position="551"/>
        <end position="655"/>
    </location>
</feature>
<feature type="active site" description="Phosphocysteine intermediate; for EIIB activity" evidence="3">
    <location>
        <position position="447"/>
    </location>
</feature>
<feature type="active site" description="Tele-phosphohistidine intermediate; for EIIA activity" evidence="2">
    <location>
        <position position="603"/>
    </location>
</feature>
<protein>
    <recommendedName>
        <fullName evidence="1">PTS system glucose-specific EIICBA component</fullName>
        <ecNumber evidence="1">2.7.1.199</ecNumber>
    </recommendedName>
    <alternativeName>
        <fullName evidence="1">EIICBA-Glc</fullName>
        <shortName evidence="1">EII-Glc</shortName>
    </alternativeName>
    <alternativeName>
        <fullName evidence="5">EIICBA-Glc 1</fullName>
    </alternativeName>
    <domain>
        <recommendedName>
            <fullName evidence="1">Glucose permease IIC component</fullName>
        </recommendedName>
        <alternativeName>
            <fullName evidence="1">PTS system glucose-specific EIIC component</fullName>
        </alternativeName>
    </domain>
    <domain>
        <recommendedName>
            <fullName evidence="1">Glucose-specific phosphotransferase enzyme IIB component</fullName>
        </recommendedName>
        <alternativeName>
            <fullName evidence="1">PTS system glucose-specific EIIB component</fullName>
        </alternativeName>
    </domain>
    <domain>
        <recommendedName>
            <fullName evidence="1">Glucose-specific phosphotransferase enzyme IIA component</fullName>
        </recommendedName>
        <alternativeName>
            <fullName evidence="1">PTS system glucose-specific EIIA component</fullName>
        </alternativeName>
    </domain>
</protein>
<evidence type="ECO:0000250" key="1">
    <source>
        <dbReference type="UniProtKB" id="Q57071"/>
    </source>
</evidence>
<evidence type="ECO:0000255" key="2">
    <source>
        <dbReference type="PROSITE-ProRule" id="PRU00416"/>
    </source>
</evidence>
<evidence type="ECO:0000255" key="3">
    <source>
        <dbReference type="PROSITE-ProRule" id="PRU00421"/>
    </source>
</evidence>
<evidence type="ECO:0000255" key="4">
    <source>
        <dbReference type="PROSITE-ProRule" id="PRU00426"/>
    </source>
</evidence>
<evidence type="ECO:0000305" key="5"/>
<reference key="1">
    <citation type="journal article" date="2008" name="J. Bacteriol.">
        <title>Genome sequence of Staphylococcus aureus strain Newman and comparative analysis of staphylococcal genomes: polymorphism and evolution of two major pathogenicity islands.</title>
        <authorList>
            <person name="Baba T."/>
            <person name="Bae T."/>
            <person name="Schneewind O."/>
            <person name="Takeuchi F."/>
            <person name="Hiramatsu K."/>
        </authorList>
    </citation>
    <scope>NUCLEOTIDE SEQUENCE [LARGE SCALE GENOMIC DNA]</scope>
    <source>
        <strain>Newman</strain>
    </source>
</reference>
<accession>A6QDH3</accession>
<gene>
    <name type="primary">ptsG</name>
    <name type="synonym">glcA</name>
    <name type="ordered locus">NWMN_0133</name>
</gene>